<sequence>MQGDPEVIEFLNEQLTAELTAINQYFLHAKLQDHKGWTKLAKYTRAESFDEMRHAEVLTDRILLLDGLPNYQRLFHVRVGQSVTEMFQADREVELEAIDRLRRGIEVMRAKHDITSANVFEAILADEEHHIDYLETQLDLIEKLGESLYLSTVIEQTQPDPSGPGSL</sequence>
<proteinExistence type="evidence at protein level"/>
<dbReference type="EC" id="1.16.3.1"/>
<dbReference type="EMBL" id="AL939111">
    <property type="protein sequence ID" value="CAB51961.1"/>
    <property type="molecule type" value="Genomic_DNA"/>
</dbReference>
<dbReference type="PIR" id="T35494">
    <property type="entry name" value="T35494"/>
</dbReference>
<dbReference type="RefSeq" id="NP_626370.1">
    <property type="nucleotide sequence ID" value="NC_003888.3"/>
</dbReference>
<dbReference type="RefSeq" id="WP_003976703.1">
    <property type="nucleotide sequence ID" value="NZ_VNID01000001.1"/>
</dbReference>
<dbReference type="PDB" id="5XX9">
    <property type="method" value="X-ray"/>
    <property type="resolution" value="2.60 A"/>
    <property type="chains" value="A/B/C/D/E/F=1-167"/>
</dbReference>
<dbReference type="PDB" id="6K3O">
    <property type="method" value="EM"/>
    <property type="resolution" value="3.40 A"/>
    <property type="chains" value="A/B/C/D/E/F/G/H/I/J/K/L/M/N/O/P/Q/R/S/T/U/V/W/X=1-167"/>
</dbReference>
<dbReference type="PDB" id="6K43">
    <property type="method" value="EM"/>
    <property type="resolution" value="3.70 A"/>
    <property type="chains" value="A/B/C/D/E/F/G/H/I/J/K/L/M/N/O/P/Q/R/S/T/U/V/W/X=1-167"/>
</dbReference>
<dbReference type="PDB" id="6K4M">
    <property type="method" value="EM"/>
    <property type="resolution" value="4.50 A"/>
    <property type="chains" value="A/B/C/D/E/F/G/H/I/J/K/L/M/N/O/P/Q/R/S/T/U/V/W/X=1-167"/>
</dbReference>
<dbReference type="PDB" id="7Y6F">
    <property type="method" value="EM"/>
    <property type="resolution" value="2.70 A"/>
    <property type="chains" value="A/B/C/D/E/F/G/H/I/J/K/L/M/N/O/P/Q/R/S/T/U/V/W/X=1-158"/>
</dbReference>
<dbReference type="PDB" id="7Y6G">
    <property type="method" value="EM"/>
    <property type="resolution" value="3.60 A"/>
    <property type="chains" value="A/B/C/D/E/F/G/H/I/J/K/L/M/N/O/P/Q/R/S/T/U/V/W/X=1-158"/>
</dbReference>
<dbReference type="PDB" id="7Y6P">
    <property type="method" value="EM"/>
    <property type="resolution" value="3.30 A"/>
    <property type="chains" value="A/B/C/D/E/F/G/H/I/J/K/L/M/N/O/P/Q/R/S/T/U/V/W/X=1-158"/>
</dbReference>
<dbReference type="PDB" id="8JAX">
    <property type="method" value="EM"/>
    <property type="resolution" value="3.27 A"/>
    <property type="chains" value="A/B/C/D/E/F/G/H/I/J/K/L/M/N/O/P/Q/R/S/T/U/V/W/X=1-162"/>
</dbReference>
<dbReference type="PDB" id="8JB0">
    <property type="method" value="EM"/>
    <property type="resolution" value="4.20 A"/>
    <property type="chains" value="A/B/C/D/E/F/G/H/I/J/K/L/M/N/O/P/Q/R/S/T/U/V/W/X=1-167"/>
</dbReference>
<dbReference type="PDBsum" id="5XX9"/>
<dbReference type="PDBsum" id="6K3O"/>
<dbReference type="PDBsum" id="6K43"/>
<dbReference type="PDBsum" id="6K4M"/>
<dbReference type="PDBsum" id="7Y6F"/>
<dbReference type="PDBsum" id="7Y6G"/>
<dbReference type="PDBsum" id="7Y6P"/>
<dbReference type="PDBsum" id="8JAX"/>
<dbReference type="PDBsum" id="8JB0"/>
<dbReference type="EMDB" id="EMD-33639"/>
<dbReference type="EMDB" id="EMD-33640"/>
<dbReference type="EMDB" id="EMD-33645"/>
<dbReference type="EMDB" id="EMD-36137"/>
<dbReference type="EMDB" id="EMD-36139"/>
<dbReference type="EMDB" id="EMD-9910"/>
<dbReference type="EMDB" id="EMD-9913"/>
<dbReference type="EMDB" id="EMD-9915"/>
<dbReference type="SMR" id="Q9S2N0"/>
<dbReference type="FunCoup" id="Q9S2N0">
    <property type="interactions" value="3"/>
</dbReference>
<dbReference type="STRING" id="100226.gene:17759711"/>
<dbReference type="PaxDb" id="100226-SCO2113"/>
<dbReference type="GeneID" id="91386893"/>
<dbReference type="KEGG" id="sco:SCO2113"/>
<dbReference type="PATRIC" id="fig|100226.15.peg.2147"/>
<dbReference type="eggNOG" id="COG2193">
    <property type="taxonomic scope" value="Bacteria"/>
</dbReference>
<dbReference type="HOGENOM" id="CLU_104506_2_0_11"/>
<dbReference type="InParanoid" id="Q9S2N0"/>
<dbReference type="OrthoDB" id="9800505at2"/>
<dbReference type="PhylomeDB" id="Q9S2N0"/>
<dbReference type="Proteomes" id="UP000001973">
    <property type="component" value="Chromosome"/>
</dbReference>
<dbReference type="GO" id="GO:0005829">
    <property type="term" value="C:cytosol"/>
    <property type="evidence" value="ECO:0000318"/>
    <property type="project" value="GO_Central"/>
</dbReference>
<dbReference type="GO" id="GO:0008199">
    <property type="term" value="F:ferric iron binding"/>
    <property type="evidence" value="ECO:0007669"/>
    <property type="project" value="InterPro"/>
</dbReference>
<dbReference type="GO" id="GO:0004322">
    <property type="term" value="F:ferroxidase activity"/>
    <property type="evidence" value="ECO:0000318"/>
    <property type="project" value="GO_Central"/>
</dbReference>
<dbReference type="GO" id="GO:0020037">
    <property type="term" value="F:heme binding"/>
    <property type="evidence" value="ECO:0000318"/>
    <property type="project" value="GO_Central"/>
</dbReference>
<dbReference type="GO" id="GO:0005506">
    <property type="term" value="F:iron ion binding"/>
    <property type="evidence" value="ECO:0000318"/>
    <property type="project" value="GO_Central"/>
</dbReference>
<dbReference type="GO" id="GO:0006879">
    <property type="term" value="P:intracellular iron ion homeostasis"/>
    <property type="evidence" value="ECO:0007669"/>
    <property type="project" value="UniProtKB-KW"/>
</dbReference>
<dbReference type="GO" id="GO:0006826">
    <property type="term" value="P:iron ion transport"/>
    <property type="evidence" value="ECO:0007669"/>
    <property type="project" value="InterPro"/>
</dbReference>
<dbReference type="CDD" id="cd00907">
    <property type="entry name" value="Bacterioferritin"/>
    <property type="match status" value="1"/>
</dbReference>
<dbReference type="FunFam" id="1.20.1260.10:FF:000005">
    <property type="entry name" value="Bacterioferritin"/>
    <property type="match status" value="1"/>
</dbReference>
<dbReference type="Gene3D" id="1.20.1260.10">
    <property type="match status" value="1"/>
</dbReference>
<dbReference type="InterPro" id="IPR002024">
    <property type="entry name" value="Bacterioferritin"/>
</dbReference>
<dbReference type="InterPro" id="IPR012347">
    <property type="entry name" value="Ferritin-like"/>
</dbReference>
<dbReference type="InterPro" id="IPR009040">
    <property type="entry name" value="Ferritin-like_diiron"/>
</dbReference>
<dbReference type="InterPro" id="IPR009078">
    <property type="entry name" value="Ferritin-like_SF"/>
</dbReference>
<dbReference type="InterPro" id="IPR008331">
    <property type="entry name" value="Ferritin_DPS_dom"/>
</dbReference>
<dbReference type="NCBIfam" id="TIGR00754">
    <property type="entry name" value="bfr"/>
    <property type="match status" value="1"/>
</dbReference>
<dbReference type="PANTHER" id="PTHR30295">
    <property type="entry name" value="BACTERIOFERRITIN"/>
    <property type="match status" value="1"/>
</dbReference>
<dbReference type="PANTHER" id="PTHR30295:SF0">
    <property type="entry name" value="BACTERIOFERRITIN"/>
    <property type="match status" value="1"/>
</dbReference>
<dbReference type="Pfam" id="PF00210">
    <property type="entry name" value="Ferritin"/>
    <property type="match status" value="1"/>
</dbReference>
<dbReference type="PIRSF" id="PIRSF002560">
    <property type="entry name" value="Bacterioferritin"/>
    <property type="match status" value="1"/>
</dbReference>
<dbReference type="PRINTS" id="PR00601">
    <property type="entry name" value="BACFERRITIN"/>
</dbReference>
<dbReference type="SUPFAM" id="SSF47240">
    <property type="entry name" value="Ferritin-like"/>
    <property type="match status" value="1"/>
</dbReference>
<dbReference type="PROSITE" id="PS00549">
    <property type="entry name" value="BACTERIOFERRITIN"/>
    <property type="match status" value="1"/>
</dbReference>
<dbReference type="PROSITE" id="PS50905">
    <property type="entry name" value="FERRITIN_LIKE"/>
    <property type="match status" value="1"/>
</dbReference>
<gene>
    <name type="primary">bfr</name>
    <name type="ordered locus">SCO2113</name>
    <name type="ORF">SC6E10.07</name>
</gene>
<protein>
    <recommendedName>
        <fullName>Bacterioferritin</fullName>
        <shortName>BFR</shortName>
        <ecNumber>1.16.3.1</ecNumber>
    </recommendedName>
</protein>
<organism>
    <name type="scientific">Streptomyces coelicolor (strain ATCC BAA-471 / A3(2) / M145)</name>
    <dbReference type="NCBI Taxonomy" id="100226"/>
    <lineage>
        <taxon>Bacteria</taxon>
        <taxon>Bacillati</taxon>
        <taxon>Actinomycetota</taxon>
        <taxon>Actinomycetes</taxon>
        <taxon>Kitasatosporales</taxon>
        <taxon>Streptomycetaceae</taxon>
        <taxon>Streptomyces</taxon>
        <taxon>Streptomyces albidoflavus group</taxon>
    </lineage>
</organism>
<accession>Q9S2N0</accession>
<feature type="chain" id="PRO_0000192612" description="Bacterioferritin">
    <location>
        <begin position="1"/>
        <end position="167"/>
    </location>
</feature>
<feature type="domain" description="Ferritin-like diiron" evidence="3">
    <location>
        <begin position="1"/>
        <end position="145"/>
    </location>
</feature>
<feature type="binding site" evidence="3">
    <location>
        <position position="18"/>
    </location>
    <ligand>
        <name>Fe cation</name>
        <dbReference type="ChEBI" id="CHEBI:24875"/>
        <label>1</label>
    </ligand>
</feature>
<feature type="binding site" evidence="3">
    <location>
        <position position="51"/>
    </location>
    <ligand>
        <name>Fe cation</name>
        <dbReference type="ChEBI" id="CHEBI:24875"/>
        <label>1</label>
    </ligand>
</feature>
<feature type="binding site" evidence="3">
    <location>
        <position position="51"/>
    </location>
    <ligand>
        <name>Fe cation</name>
        <dbReference type="ChEBI" id="CHEBI:24875"/>
        <label>2</label>
    </ligand>
</feature>
<feature type="binding site" description="axial binding residue" evidence="3">
    <location>
        <position position="52"/>
    </location>
    <ligand>
        <name>heme b</name>
        <dbReference type="ChEBI" id="CHEBI:60344"/>
        <note>ligand shared between dimeric partners</note>
    </ligand>
    <ligandPart>
        <name>Fe</name>
        <dbReference type="ChEBI" id="CHEBI:18248"/>
    </ligandPart>
</feature>
<feature type="binding site" evidence="3">
    <location>
        <position position="54"/>
    </location>
    <ligand>
        <name>Fe cation</name>
        <dbReference type="ChEBI" id="CHEBI:24875"/>
        <label>1</label>
    </ligand>
</feature>
<feature type="binding site" evidence="3">
    <location>
        <position position="94"/>
    </location>
    <ligand>
        <name>Fe cation</name>
        <dbReference type="ChEBI" id="CHEBI:24875"/>
        <label>2</label>
    </ligand>
</feature>
<feature type="binding site" evidence="3">
    <location>
        <position position="127"/>
    </location>
    <ligand>
        <name>Fe cation</name>
        <dbReference type="ChEBI" id="CHEBI:24875"/>
        <label>1</label>
    </ligand>
</feature>
<feature type="binding site" evidence="3">
    <location>
        <position position="127"/>
    </location>
    <ligand>
        <name>Fe cation</name>
        <dbReference type="ChEBI" id="CHEBI:24875"/>
        <label>2</label>
    </ligand>
</feature>
<feature type="binding site" evidence="3">
    <location>
        <position position="130"/>
    </location>
    <ligand>
        <name>Fe cation</name>
        <dbReference type="ChEBI" id="CHEBI:24875"/>
        <label>2</label>
    </ligand>
</feature>
<feature type="helix" evidence="5">
    <location>
        <begin position="5"/>
        <end position="34"/>
    </location>
</feature>
<feature type="helix" evidence="5">
    <location>
        <begin position="38"/>
        <end position="64"/>
    </location>
</feature>
<feature type="helix" evidence="5">
    <location>
        <begin position="83"/>
        <end position="110"/>
    </location>
</feature>
<feature type="helix" evidence="5">
    <location>
        <begin position="114"/>
        <end position="144"/>
    </location>
</feature>
<feature type="helix" evidence="5">
    <location>
        <begin position="146"/>
        <end position="151"/>
    </location>
</feature>
<comment type="function">
    <text evidence="1">Iron-storage protein, whose ferroxidase center binds Fe(2+), oxidizes it using dioxygen to Fe(3+), and participates in the subsequent Fe(3+) oxide mineral core formation within the central cavity of the BFR protein shell.</text>
</comment>
<comment type="catalytic activity">
    <reaction>
        <text>4 Fe(2+) + O2 + 4 H(+) = 4 Fe(3+) + 2 H2O</text>
        <dbReference type="Rhea" id="RHEA:11148"/>
        <dbReference type="ChEBI" id="CHEBI:15377"/>
        <dbReference type="ChEBI" id="CHEBI:15378"/>
        <dbReference type="ChEBI" id="CHEBI:15379"/>
        <dbReference type="ChEBI" id="CHEBI:29033"/>
        <dbReference type="ChEBI" id="CHEBI:29034"/>
        <dbReference type="EC" id="1.16.3.1"/>
    </reaction>
</comment>
<comment type="catalytic activity">
    <reaction evidence="2">
        <text>Fe(2+)(in) = Fe(2+)(out)</text>
        <dbReference type="Rhea" id="RHEA:28486"/>
        <dbReference type="ChEBI" id="CHEBI:29033"/>
    </reaction>
</comment>
<comment type="cofactor">
    <cofactor evidence="1">
        <name>heme b</name>
        <dbReference type="ChEBI" id="CHEBI:60344"/>
    </cofactor>
    <text evidence="1">Binds 1 heme b (iron(II)-protoporphyrin IX) group per dimer.</text>
</comment>
<comment type="subunit">
    <text evidence="1">Homooligomer of 24 subunits, arranged as 12 dimers, that are packed together to form an approximately spherical molecule with a central cavity, in which large amounts of iron can be deposited.</text>
</comment>
<comment type="similarity">
    <text evidence="4">Belongs to the bacterioferritin family.</text>
</comment>
<keyword id="KW-0002">3D-structure</keyword>
<keyword id="KW-0349">Heme</keyword>
<keyword id="KW-0408">Iron</keyword>
<keyword id="KW-0409">Iron storage</keyword>
<keyword id="KW-0479">Metal-binding</keyword>
<keyword id="KW-0560">Oxidoreductase</keyword>
<keyword id="KW-1185">Reference proteome</keyword>
<name>BFR_STRCO</name>
<evidence type="ECO:0000250" key="1"/>
<evidence type="ECO:0000250" key="2">
    <source>
        <dbReference type="UniProtKB" id="Q9HWF9"/>
    </source>
</evidence>
<evidence type="ECO:0000255" key="3">
    <source>
        <dbReference type="PROSITE-ProRule" id="PRU00085"/>
    </source>
</evidence>
<evidence type="ECO:0000305" key="4"/>
<evidence type="ECO:0007829" key="5">
    <source>
        <dbReference type="PDB" id="5XX9"/>
    </source>
</evidence>
<reference key="1">
    <citation type="journal article" date="2002" name="Nature">
        <title>Complete genome sequence of the model actinomycete Streptomyces coelicolor A3(2).</title>
        <authorList>
            <person name="Bentley S.D."/>
            <person name="Chater K.F."/>
            <person name="Cerdeno-Tarraga A.-M."/>
            <person name="Challis G.L."/>
            <person name="Thomson N.R."/>
            <person name="James K.D."/>
            <person name="Harris D.E."/>
            <person name="Quail M.A."/>
            <person name="Kieser H."/>
            <person name="Harper D."/>
            <person name="Bateman A."/>
            <person name="Brown S."/>
            <person name="Chandra G."/>
            <person name="Chen C.W."/>
            <person name="Collins M."/>
            <person name="Cronin A."/>
            <person name="Fraser A."/>
            <person name="Goble A."/>
            <person name="Hidalgo J."/>
            <person name="Hornsby T."/>
            <person name="Howarth S."/>
            <person name="Huang C.-H."/>
            <person name="Kieser T."/>
            <person name="Larke L."/>
            <person name="Murphy L.D."/>
            <person name="Oliver K."/>
            <person name="O'Neil S."/>
            <person name="Rabbinowitsch E."/>
            <person name="Rajandream M.A."/>
            <person name="Rutherford K.M."/>
            <person name="Rutter S."/>
            <person name="Seeger K."/>
            <person name="Saunders D."/>
            <person name="Sharp S."/>
            <person name="Squares R."/>
            <person name="Squares S."/>
            <person name="Taylor K."/>
            <person name="Warren T."/>
            <person name="Wietzorrek A."/>
            <person name="Woodward J.R."/>
            <person name="Barrell B.G."/>
            <person name="Parkhill J."/>
            <person name="Hopwood D.A."/>
        </authorList>
    </citation>
    <scope>NUCLEOTIDE SEQUENCE [LARGE SCALE GENOMIC DNA]</scope>
    <source>
        <strain>ATCC BAA-471 / A3(2) / M145</strain>
    </source>
</reference>